<name>UGPA2_SCHPO</name>
<dbReference type="EC" id="2.7.7.9"/>
<dbReference type="EMBL" id="CU329672">
    <property type="protein sequence ID" value="CAA19137.1"/>
    <property type="molecule type" value="Genomic_DNA"/>
</dbReference>
<dbReference type="EMBL" id="AB027910">
    <property type="protein sequence ID" value="BAA87214.1"/>
    <property type="molecule type" value="Genomic_DNA"/>
</dbReference>
<dbReference type="PIR" id="T41618">
    <property type="entry name" value="T41618"/>
</dbReference>
<dbReference type="SMR" id="O59819"/>
<dbReference type="BioGRID" id="276144">
    <property type="interactions" value="2"/>
</dbReference>
<dbReference type="FunCoup" id="O59819">
    <property type="interactions" value="529"/>
</dbReference>
<dbReference type="STRING" id="284812.O59819"/>
<dbReference type="iPTMnet" id="O59819"/>
<dbReference type="PaxDb" id="4896-SPCC794.10.1"/>
<dbReference type="EnsemblFungi" id="SPCC794.10.1">
    <property type="protein sequence ID" value="SPCC794.10.1:pep"/>
    <property type="gene ID" value="SPCC794.10"/>
</dbReference>
<dbReference type="KEGG" id="spo:2539585"/>
<dbReference type="PomBase" id="SPCC794.10"/>
<dbReference type="VEuPathDB" id="FungiDB:SPCC794.10"/>
<dbReference type="eggNOG" id="KOG2638">
    <property type="taxonomic scope" value="Eukaryota"/>
</dbReference>
<dbReference type="HOGENOM" id="CLU_023632_3_0_1"/>
<dbReference type="InParanoid" id="O59819"/>
<dbReference type="OMA" id="CDWDSIR"/>
<dbReference type="PhylomeDB" id="O59819"/>
<dbReference type="PRO" id="PR:O59819"/>
<dbReference type="Proteomes" id="UP000002485">
    <property type="component" value="Chromosome III"/>
</dbReference>
<dbReference type="GO" id="GO:0005737">
    <property type="term" value="C:cytoplasm"/>
    <property type="evidence" value="ECO:0000318"/>
    <property type="project" value="GO_Central"/>
</dbReference>
<dbReference type="GO" id="GO:0005829">
    <property type="term" value="C:cytosol"/>
    <property type="evidence" value="ECO:0007005"/>
    <property type="project" value="PomBase"/>
</dbReference>
<dbReference type="GO" id="GO:0005634">
    <property type="term" value="C:nucleus"/>
    <property type="evidence" value="ECO:0007005"/>
    <property type="project" value="PomBase"/>
</dbReference>
<dbReference type="GO" id="GO:0070569">
    <property type="term" value="F:uridylyltransferase activity"/>
    <property type="evidence" value="ECO:0007669"/>
    <property type="project" value="InterPro"/>
</dbReference>
<dbReference type="GO" id="GO:0005977">
    <property type="term" value="P:glycogen metabolic process"/>
    <property type="evidence" value="ECO:0000318"/>
    <property type="project" value="GO_Central"/>
</dbReference>
<dbReference type="GO" id="GO:0006011">
    <property type="term" value="P:UDP-alpha-D-glucose metabolic process"/>
    <property type="evidence" value="ECO:0000318"/>
    <property type="project" value="GO_Central"/>
</dbReference>
<dbReference type="CDD" id="cd00897">
    <property type="entry name" value="UGPase_euk"/>
    <property type="match status" value="1"/>
</dbReference>
<dbReference type="FunFam" id="2.160.10.10:FF:000001">
    <property type="entry name" value="UTP--glucose-1-phosphate uridylyltransferase"/>
    <property type="match status" value="1"/>
</dbReference>
<dbReference type="FunFam" id="3.90.550.10:FF:000002">
    <property type="entry name" value="UTP--glucose-1-phosphate uridylyltransferase"/>
    <property type="match status" value="1"/>
</dbReference>
<dbReference type="Gene3D" id="2.160.10.10">
    <property type="entry name" value="Hexapeptide repeat proteins"/>
    <property type="match status" value="1"/>
</dbReference>
<dbReference type="Gene3D" id="3.90.550.10">
    <property type="entry name" value="Spore Coat Polysaccharide Biosynthesis Protein SpsA, Chain A"/>
    <property type="match status" value="1"/>
</dbReference>
<dbReference type="InterPro" id="IPR029044">
    <property type="entry name" value="Nucleotide-diphossugar_trans"/>
</dbReference>
<dbReference type="InterPro" id="IPR002618">
    <property type="entry name" value="UDPGP_fam"/>
</dbReference>
<dbReference type="InterPro" id="IPR016267">
    <property type="entry name" value="UDPGP_trans"/>
</dbReference>
<dbReference type="PANTHER" id="PTHR43511">
    <property type="match status" value="1"/>
</dbReference>
<dbReference type="Pfam" id="PF01704">
    <property type="entry name" value="UDPGP"/>
    <property type="match status" value="1"/>
</dbReference>
<dbReference type="PIRSF" id="PIRSF000806">
    <property type="entry name" value="UDPGP"/>
    <property type="match status" value="1"/>
</dbReference>
<dbReference type="SUPFAM" id="SSF53448">
    <property type="entry name" value="Nucleotide-diphospho-sugar transferases"/>
    <property type="match status" value="1"/>
</dbReference>
<organism>
    <name type="scientific">Schizosaccharomyces pombe (strain 972 / ATCC 24843)</name>
    <name type="common">Fission yeast</name>
    <dbReference type="NCBI Taxonomy" id="284812"/>
    <lineage>
        <taxon>Eukaryota</taxon>
        <taxon>Fungi</taxon>
        <taxon>Dikarya</taxon>
        <taxon>Ascomycota</taxon>
        <taxon>Taphrinomycotina</taxon>
        <taxon>Schizosaccharomycetes</taxon>
        <taxon>Schizosaccharomycetales</taxon>
        <taxon>Schizosaccharomycetaceae</taxon>
        <taxon>Schizosaccharomyces</taxon>
    </lineage>
</organism>
<evidence type="ECO:0000250" key="1"/>
<evidence type="ECO:0000250" key="2">
    <source>
        <dbReference type="UniProtKB" id="Q16851"/>
    </source>
</evidence>
<evidence type="ECO:0000250" key="3">
    <source>
        <dbReference type="UniProtKB" id="Q9M9P3"/>
    </source>
</evidence>
<evidence type="ECO:0000269" key="4">
    <source>
    </source>
</evidence>
<evidence type="ECO:0000269" key="5">
    <source>
    </source>
</evidence>
<evidence type="ECO:0000305" key="6"/>
<feature type="chain" id="PRO_0000185764" description="Probable UTP--glucose-1-phosphate uridylyltransferase">
    <location>
        <begin position="1"/>
        <end position="499"/>
    </location>
</feature>
<feature type="binding site" evidence="3">
    <location>
        <begin position="108"/>
        <end position="111"/>
    </location>
    <ligand>
        <name>UTP</name>
        <dbReference type="ChEBI" id="CHEBI:46398"/>
    </ligand>
</feature>
<feature type="binding site" evidence="2">
    <location>
        <begin position="110"/>
        <end position="111"/>
    </location>
    <ligand>
        <name>substrate</name>
    </ligand>
</feature>
<feature type="binding site" evidence="3">
    <location>
        <position position="122"/>
    </location>
    <ligand>
        <name>UTP</name>
        <dbReference type="ChEBI" id="CHEBI:46398"/>
    </ligand>
</feature>
<feature type="binding site" evidence="3">
    <location>
        <position position="185"/>
    </location>
    <ligand>
        <name>UTP</name>
        <dbReference type="ChEBI" id="CHEBI:46398"/>
    </ligand>
</feature>
<feature type="binding site" evidence="3">
    <location>
        <position position="214"/>
    </location>
    <ligand>
        <name>UTP</name>
        <dbReference type="ChEBI" id="CHEBI:46398"/>
    </ligand>
</feature>
<feature type="binding site" evidence="2">
    <location>
        <position position="215"/>
    </location>
    <ligand>
        <name>substrate</name>
    </ligand>
</feature>
<feature type="binding site" evidence="2">
    <location>
        <begin position="243"/>
        <end position="245"/>
    </location>
    <ligand>
        <name>substrate</name>
    </ligand>
</feature>
<feature type="binding site" evidence="3">
    <location>
        <position position="245"/>
    </location>
    <ligand>
        <name>UTP</name>
        <dbReference type="ChEBI" id="CHEBI:46398"/>
    </ligand>
</feature>
<feature type="binding site" evidence="3">
    <location>
        <position position="387"/>
    </location>
    <ligand>
        <name>UTP</name>
        <dbReference type="ChEBI" id="CHEBI:46398"/>
    </ligand>
</feature>
<keyword id="KW-0963">Cytoplasm</keyword>
<keyword id="KW-0548">Nucleotidyltransferase</keyword>
<keyword id="KW-0539">Nucleus</keyword>
<keyword id="KW-1185">Reference proteome</keyword>
<keyword id="KW-0808">Transferase</keyword>
<protein>
    <recommendedName>
        <fullName>Probable UTP--glucose-1-phosphate uridylyltransferase</fullName>
        <ecNumber>2.7.7.9</ecNumber>
    </recommendedName>
    <alternativeName>
        <fullName>UDP-glucose pyrophosphorylase</fullName>
        <shortName>UDPGP</shortName>
        <shortName>UGPase</shortName>
    </alternativeName>
</protein>
<gene>
    <name type="ORF">SPCC794.10</name>
</gene>
<accession>O59819</accession>
<accession>Q9UTZ5</accession>
<comment type="function">
    <text evidence="1">Plays a central role as a glucosyl donor in cellular metabolic pathways.</text>
</comment>
<comment type="catalytic activity">
    <reaction>
        <text>alpha-D-glucose 1-phosphate + UTP + H(+) = UDP-alpha-D-glucose + diphosphate</text>
        <dbReference type="Rhea" id="RHEA:19889"/>
        <dbReference type="ChEBI" id="CHEBI:15378"/>
        <dbReference type="ChEBI" id="CHEBI:33019"/>
        <dbReference type="ChEBI" id="CHEBI:46398"/>
        <dbReference type="ChEBI" id="CHEBI:58601"/>
        <dbReference type="ChEBI" id="CHEBI:58885"/>
        <dbReference type="EC" id="2.7.7.9"/>
    </reaction>
</comment>
<comment type="subcellular location">
    <subcellularLocation>
        <location evidence="4">Cytoplasm</location>
    </subcellularLocation>
    <subcellularLocation>
        <location evidence="5">Nucleus</location>
    </subcellularLocation>
</comment>
<comment type="similarity">
    <text evidence="6">Belongs to the UDPGP type 1 family.</text>
</comment>
<sequence length="499" mass="56740">MLHRRIHFKSQSTLDFDSVAVSISASTMKNELDKLVLNSRVSDKKTFGIQMDNFFALYRRYLLHTVKGYECDWDSIRPLGPEDMIDYGDLPLCKNAGKYLNRLAVVKLNGGMGNALGVNYPKAMIEVRDNQSFLDLSIRQIEYLNRRYDVSVPFILMNSYDTNDETCKVLRKYAGCKIDISTFEQSRYPRVFVDSQLPVPKAAPSPIEEWYPPGHGDIFDALVHSGTIERLLAQGKDYLFVSNIDNLGASVDLNILSHVIDNQIEYSMEITDKTKADIKVGILVNQDGLLRLLETNQVPEQHREEFMSDKVFKYINTNNVWLYLPAVKRVVENRELNLDIMPNIETVYYNNEPARIIEFTTAIGSAISQFKKTEGIRVSRPRFISVKNSSDLFLVRCDLYNVDHGSLKIEESRLGFPPPVVRMSNEFKDIAELFCRIPYMPSMKDLVSLSISGNVYFGRNVILKGNIVIVASENTILCIPSNAVLENCVVTGNCKIMEC</sequence>
<reference key="1">
    <citation type="journal article" date="2002" name="Nature">
        <title>The genome sequence of Schizosaccharomyces pombe.</title>
        <authorList>
            <person name="Wood V."/>
            <person name="Gwilliam R."/>
            <person name="Rajandream M.A."/>
            <person name="Lyne M.H."/>
            <person name="Lyne R."/>
            <person name="Stewart A."/>
            <person name="Sgouros J.G."/>
            <person name="Peat N."/>
            <person name="Hayles J."/>
            <person name="Baker S.G."/>
            <person name="Basham D."/>
            <person name="Bowman S."/>
            <person name="Brooks K."/>
            <person name="Brown D."/>
            <person name="Brown S."/>
            <person name="Chillingworth T."/>
            <person name="Churcher C.M."/>
            <person name="Collins M."/>
            <person name="Connor R."/>
            <person name="Cronin A."/>
            <person name="Davis P."/>
            <person name="Feltwell T."/>
            <person name="Fraser A."/>
            <person name="Gentles S."/>
            <person name="Goble A."/>
            <person name="Hamlin N."/>
            <person name="Harris D.E."/>
            <person name="Hidalgo J."/>
            <person name="Hodgson G."/>
            <person name="Holroyd S."/>
            <person name="Hornsby T."/>
            <person name="Howarth S."/>
            <person name="Huckle E.J."/>
            <person name="Hunt S."/>
            <person name="Jagels K."/>
            <person name="James K.D."/>
            <person name="Jones L."/>
            <person name="Jones M."/>
            <person name="Leather S."/>
            <person name="McDonald S."/>
            <person name="McLean J."/>
            <person name="Mooney P."/>
            <person name="Moule S."/>
            <person name="Mungall K.L."/>
            <person name="Murphy L.D."/>
            <person name="Niblett D."/>
            <person name="Odell C."/>
            <person name="Oliver K."/>
            <person name="O'Neil S."/>
            <person name="Pearson D."/>
            <person name="Quail M.A."/>
            <person name="Rabbinowitsch E."/>
            <person name="Rutherford K.M."/>
            <person name="Rutter S."/>
            <person name="Saunders D."/>
            <person name="Seeger K."/>
            <person name="Sharp S."/>
            <person name="Skelton J."/>
            <person name="Simmonds M.N."/>
            <person name="Squares R."/>
            <person name="Squares S."/>
            <person name="Stevens K."/>
            <person name="Taylor K."/>
            <person name="Taylor R.G."/>
            <person name="Tivey A."/>
            <person name="Walsh S.V."/>
            <person name="Warren T."/>
            <person name="Whitehead S."/>
            <person name="Woodward J.R."/>
            <person name="Volckaert G."/>
            <person name="Aert R."/>
            <person name="Robben J."/>
            <person name="Grymonprez B."/>
            <person name="Weltjens I."/>
            <person name="Vanstreels E."/>
            <person name="Rieger M."/>
            <person name="Schaefer M."/>
            <person name="Mueller-Auer S."/>
            <person name="Gabel C."/>
            <person name="Fuchs M."/>
            <person name="Duesterhoeft A."/>
            <person name="Fritzc C."/>
            <person name="Holzer E."/>
            <person name="Moestl D."/>
            <person name="Hilbert H."/>
            <person name="Borzym K."/>
            <person name="Langer I."/>
            <person name="Beck A."/>
            <person name="Lehrach H."/>
            <person name="Reinhardt R."/>
            <person name="Pohl T.M."/>
            <person name="Eger P."/>
            <person name="Zimmermann W."/>
            <person name="Wedler H."/>
            <person name="Wambutt R."/>
            <person name="Purnelle B."/>
            <person name="Goffeau A."/>
            <person name="Cadieu E."/>
            <person name="Dreano S."/>
            <person name="Gloux S."/>
            <person name="Lelaure V."/>
            <person name="Mottier S."/>
            <person name="Galibert F."/>
            <person name="Aves S.J."/>
            <person name="Xiang Z."/>
            <person name="Hunt C."/>
            <person name="Moore K."/>
            <person name="Hurst S.M."/>
            <person name="Lucas M."/>
            <person name="Rochet M."/>
            <person name="Gaillardin C."/>
            <person name="Tallada V.A."/>
            <person name="Garzon A."/>
            <person name="Thode G."/>
            <person name="Daga R.R."/>
            <person name="Cruzado L."/>
            <person name="Jimenez J."/>
            <person name="Sanchez M."/>
            <person name="del Rey F."/>
            <person name="Benito J."/>
            <person name="Dominguez A."/>
            <person name="Revuelta J.L."/>
            <person name="Moreno S."/>
            <person name="Armstrong J."/>
            <person name="Forsburg S.L."/>
            <person name="Cerutti L."/>
            <person name="Lowe T."/>
            <person name="McCombie W.R."/>
            <person name="Paulsen I."/>
            <person name="Potashkin J."/>
            <person name="Shpakovski G.V."/>
            <person name="Ussery D."/>
            <person name="Barrell B.G."/>
            <person name="Nurse P."/>
        </authorList>
    </citation>
    <scope>NUCLEOTIDE SEQUENCE [LARGE SCALE GENOMIC DNA]</scope>
    <source>
        <strain>972 / ATCC 24843</strain>
    </source>
</reference>
<reference key="2">
    <citation type="journal article" date="2000" name="Genes Cells">
        <title>Large-scale screening of intracellular protein localization in living fission yeast cells by the use of a GFP-fusion genomic DNA library.</title>
        <authorList>
            <person name="Ding D.-Q."/>
            <person name="Tomita Y."/>
            <person name="Yamamoto A."/>
            <person name="Chikashige Y."/>
            <person name="Haraguchi T."/>
            <person name="Hiraoka Y."/>
        </authorList>
    </citation>
    <scope>NUCLEOTIDE SEQUENCE [LARGE SCALE GENOMIC DNA] OF 44-252</scope>
    <scope>SUBCELLULAR LOCATION</scope>
    <source>
        <strain>ATCC 38364 / 968</strain>
    </source>
</reference>
<reference key="3">
    <citation type="journal article" date="2006" name="Nat. Biotechnol.">
        <title>ORFeome cloning and global analysis of protein localization in the fission yeast Schizosaccharomyces pombe.</title>
        <authorList>
            <person name="Matsuyama A."/>
            <person name="Arai R."/>
            <person name="Yashiroda Y."/>
            <person name="Shirai A."/>
            <person name="Kamata A."/>
            <person name="Sekido S."/>
            <person name="Kobayashi Y."/>
            <person name="Hashimoto A."/>
            <person name="Hamamoto M."/>
            <person name="Hiraoka Y."/>
            <person name="Horinouchi S."/>
            <person name="Yoshida M."/>
        </authorList>
    </citation>
    <scope>SUBCELLULAR LOCATION [LARGE SCALE ANALYSIS]</scope>
</reference>
<proteinExistence type="inferred from homology"/>